<sequence>MIEKLEELRAQWRKLQQEVENPSLFSSTQSYRERMRDHAYLSRLMEEYDRYLLTEKQLEDAHVLIQDESDADFKDVIRQEIRTLEAALHTSQKRLKTLLIPPDSLQEKNIIMEIRGGTGGDEAALFAADLFRMYTHYAESKQWRYEVLAVSETELGGFKEITFSISGRDVYGSLRYESGVHRVQRVPSTEASGRIHTSAVTVAVLPEMEETEVDIRAEDVRVDVMRASGPGGQCVNTTDSAVRLTHLPTGIVVVCQDEKSQIKNKAKAMRVLRSRVYDLEESKRQVARARERKSQVGSGDRSERIRTYNFPQNRVTDHRVRVTLYKLDAVMQGALDDIIEPLCIASRESVI</sequence>
<dbReference type="EMBL" id="AE000520">
    <property type="protein sequence ID" value="AAC65047.1"/>
    <property type="molecule type" value="Genomic_DNA"/>
</dbReference>
<dbReference type="PIR" id="E71372">
    <property type="entry name" value="E71372"/>
</dbReference>
<dbReference type="RefSeq" id="WP_010881500.1">
    <property type="nucleotide sequence ID" value="NC_000919.1"/>
</dbReference>
<dbReference type="SMR" id="O83090"/>
<dbReference type="IntAct" id="O83090">
    <property type="interactions" value="3"/>
</dbReference>
<dbReference type="STRING" id="243276.TP_0051"/>
<dbReference type="EnsemblBacteria" id="AAC65047">
    <property type="protein sequence ID" value="AAC65047"/>
    <property type="gene ID" value="TP_0051"/>
</dbReference>
<dbReference type="GeneID" id="93875847"/>
<dbReference type="KEGG" id="tpa:TP_0051"/>
<dbReference type="KEGG" id="tpw:TPANIC_0051"/>
<dbReference type="eggNOG" id="COG0216">
    <property type="taxonomic scope" value="Bacteria"/>
</dbReference>
<dbReference type="HOGENOM" id="CLU_036856_0_1_12"/>
<dbReference type="OrthoDB" id="9806673at2"/>
<dbReference type="Proteomes" id="UP000000811">
    <property type="component" value="Chromosome"/>
</dbReference>
<dbReference type="GO" id="GO:0005737">
    <property type="term" value="C:cytoplasm"/>
    <property type="evidence" value="ECO:0007669"/>
    <property type="project" value="UniProtKB-SubCell"/>
</dbReference>
<dbReference type="GO" id="GO:0016149">
    <property type="term" value="F:translation release factor activity, codon specific"/>
    <property type="evidence" value="ECO:0007669"/>
    <property type="project" value="UniProtKB-UniRule"/>
</dbReference>
<dbReference type="FunFam" id="3.30.160.20:FF:000004">
    <property type="entry name" value="Peptide chain release factor 1"/>
    <property type="match status" value="1"/>
</dbReference>
<dbReference type="FunFam" id="3.30.70.1660:FF:000002">
    <property type="entry name" value="Peptide chain release factor 1"/>
    <property type="match status" value="1"/>
</dbReference>
<dbReference type="FunFam" id="3.30.70.1660:FF:000004">
    <property type="entry name" value="Peptide chain release factor 1"/>
    <property type="match status" value="1"/>
</dbReference>
<dbReference type="Gene3D" id="3.30.160.20">
    <property type="match status" value="1"/>
</dbReference>
<dbReference type="Gene3D" id="3.30.70.1660">
    <property type="match status" value="1"/>
</dbReference>
<dbReference type="Gene3D" id="6.10.140.1950">
    <property type="match status" value="1"/>
</dbReference>
<dbReference type="HAMAP" id="MF_00093">
    <property type="entry name" value="Rel_fac_1"/>
    <property type="match status" value="1"/>
</dbReference>
<dbReference type="InterPro" id="IPR005139">
    <property type="entry name" value="PCRF"/>
</dbReference>
<dbReference type="InterPro" id="IPR000352">
    <property type="entry name" value="Pep_chain_release_fac_I"/>
</dbReference>
<dbReference type="InterPro" id="IPR045853">
    <property type="entry name" value="Pep_chain_release_fac_I_sf"/>
</dbReference>
<dbReference type="InterPro" id="IPR050057">
    <property type="entry name" value="Prokaryotic/Mito_RF"/>
</dbReference>
<dbReference type="InterPro" id="IPR004373">
    <property type="entry name" value="RF-1"/>
</dbReference>
<dbReference type="NCBIfam" id="TIGR00019">
    <property type="entry name" value="prfA"/>
    <property type="match status" value="1"/>
</dbReference>
<dbReference type="NCBIfam" id="NF001859">
    <property type="entry name" value="PRK00591.1"/>
    <property type="match status" value="1"/>
</dbReference>
<dbReference type="PANTHER" id="PTHR43804">
    <property type="entry name" value="LD18447P"/>
    <property type="match status" value="1"/>
</dbReference>
<dbReference type="PANTHER" id="PTHR43804:SF7">
    <property type="entry name" value="LD18447P"/>
    <property type="match status" value="1"/>
</dbReference>
<dbReference type="Pfam" id="PF03462">
    <property type="entry name" value="PCRF"/>
    <property type="match status" value="1"/>
</dbReference>
<dbReference type="Pfam" id="PF00472">
    <property type="entry name" value="RF-1"/>
    <property type="match status" value="1"/>
</dbReference>
<dbReference type="SMART" id="SM00937">
    <property type="entry name" value="PCRF"/>
    <property type="match status" value="1"/>
</dbReference>
<dbReference type="SUPFAM" id="SSF75620">
    <property type="entry name" value="Release factor"/>
    <property type="match status" value="1"/>
</dbReference>
<dbReference type="PROSITE" id="PS00745">
    <property type="entry name" value="RF_PROK_I"/>
    <property type="match status" value="1"/>
</dbReference>
<feature type="chain" id="PRO_0000177764" description="Peptide chain release factor 1">
    <location>
        <begin position="1"/>
        <end position="351"/>
    </location>
</feature>
<feature type="modified residue" description="N5-methylglutamine" evidence="1">
    <location>
        <position position="233"/>
    </location>
</feature>
<keyword id="KW-0963">Cytoplasm</keyword>
<keyword id="KW-0488">Methylation</keyword>
<keyword id="KW-0648">Protein biosynthesis</keyword>
<keyword id="KW-1185">Reference proteome</keyword>
<comment type="function">
    <text evidence="1">Peptide chain release factor 1 directs the termination of translation in response to the peptide chain termination codons UAG and UAA.</text>
</comment>
<comment type="subcellular location">
    <subcellularLocation>
        <location evidence="1">Cytoplasm</location>
    </subcellularLocation>
</comment>
<comment type="PTM">
    <text evidence="1">Methylated by PrmC. Methylation increases the termination efficiency of RF1 (By similarity).</text>
</comment>
<comment type="similarity">
    <text evidence="2">Belongs to the prokaryotic/mitochondrial release factor family.</text>
</comment>
<gene>
    <name type="primary">prfA</name>
    <name type="ordered locus">TP_0051</name>
</gene>
<organism>
    <name type="scientific">Treponema pallidum (strain Nichols)</name>
    <dbReference type="NCBI Taxonomy" id="243276"/>
    <lineage>
        <taxon>Bacteria</taxon>
        <taxon>Pseudomonadati</taxon>
        <taxon>Spirochaetota</taxon>
        <taxon>Spirochaetia</taxon>
        <taxon>Spirochaetales</taxon>
        <taxon>Treponemataceae</taxon>
        <taxon>Treponema</taxon>
    </lineage>
</organism>
<name>RF1_TREPA</name>
<accession>O83090</accession>
<protein>
    <recommendedName>
        <fullName>Peptide chain release factor 1</fullName>
        <shortName>RF-1</shortName>
    </recommendedName>
</protein>
<evidence type="ECO:0000250" key="1"/>
<evidence type="ECO:0000305" key="2"/>
<reference key="1">
    <citation type="journal article" date="1998" name="Science">
        <title>Complete genome sequence of Treponema pallidum, the syphilis spirochete.</title>
        <authorList>
            <person name="Fraser C.M."/>
            <person name="Norris S.J."/>
            <person name="Weinstock G.M."/>
            <person name="White O."/>
            <person name="Sutton G.G."/>
            <person name="Dodson R.J."/>
            <person name="Gwinn M.L."/>
            <person name="Hickey E.K."/>
            <person name="Clayton R.A."/>
            <person name="Ketchum K.A."/>
            <person name="Sodergren E."/>
            <person name="Hardham J.M."/>
            <person name="McLeod M.P."/>
            <person name="Salzberg S.L."/>
            <person name="Peterson J.D."/>
            <person name="Khalak H.G."/>
            <person name="Richardson D.L."/>
            <person name="Howell J.K."/>
            <person name="Chidambaram M."/>
            <person name="Utterback T.R."/>
            <person name="McDonald L.A."/>
            <person name="Artiach P."/>
            <person name="Bowman C."/>
            <person name="Cotton M.D."/>
            <person name="Fujii C."/>
            <person name="Garland S.A."/>
            <person name="Hatch B."/>
            <person name="Horst K."/>
            <person name="Roberts K.M."/>
            <person name="Sandusky M."/>
            <person name="Weidman J.F."/>
            <person name="Smith H.O."/>
            <person name="Venter J.C."/>
        </authorList>
    </citation>
    <scope>NUCLEOTIDE SEQUENCE [LARGE SCALE GENOMIC DNA]</scope>
    <source>
        <strain>Nichols</strain>
    </source>
</reference>
<proteinExistence type="inferred from homology"/>